<dbReference type="EMBL" id="CP000570">
    <property type="protein sequence ID" value="ABN84062.1"/>
    <property type="molecule type" value="Genomic_DNA"/>
</dbReference>
<dbReference type="RefSeq" id="WP_004194248.1">
    <property type="nucleotide sequence ID" value="NC_009074.1"/>
</dbReference>
<dbReference type="SMR" id="A3ND74"/>
<dbReference type="GeneID" id="93061421"/>
<dbReference type="KEGG" id="bpd:BURPS668_3284"/>
<dbReference type="HOGENOM" id="CLU_050019_0_0_4"/>
<dbReference type="GO" id="GO:0003677">
    <property type="term" value="F:DNA binding"/>
    <property type="evidence" value="ECO:0007669"/>
    <property type="project" value="InterPro"/>
</dbReference>
<dbReference type="GO" id="GO:0045892">
    <property type="term" value="P:negative regulation of DNA-templated transcription"/>
    <property type="evidence" value="ECO:0007669"/>
    <property type="project" value="UniProtKB-UniRule"/>
</dbReference>
<dbReference type="Gene3D" id="3.30.450.40">
    <property type="match status" value="1"/>
</dbReference>
<dbReference type="Gene3D" id="3.30.390.60">
    <property type="entry name" value="Heat-inducible transcription repressor hrca homolog, domain 3"/>
    <property type="match status" value="1"/>
</dbReference>
<dbReference type="Gene3D" id="1.10.10.10">
    <property type="entry name" value="Winged helix-like DNA-binding domain superfamily/Winged helix DNA-binding domain"/>
    <property type="match status" value="1"/>
</dbReference>
<dbReference type="HAMAP" id="MF_00081">
    <property type="entry name" value="HrcA"/>
    <property type="match status" value="1"/>
</dbReference>
<dbReference type="InterPro" id="IPR029016">
    <property type="entry name" value="GAF-like_dom_sf"/>
</dbReference>
<dbReference type="InterPro" id="IPR002571">
    <property type="entry name" value="HrcA"/>
</dbReference>
<dbReference type="InterPro" id="IPR021153">
    <property type="entry name" value="HrcA_C"/>
</dbReference>
<dbReference type="InterPro" id="IPR036388">
    <property type="entry name" value="WH-like_DNA-bd_sf"/>
</dbReference>
<dbReference type="InterPro" id="IPR036390">
    <property type="entry name" value="WH_DNA-bd_sf"/>
</dbReference>
<dbReference type="InterPro" id="IPR005104">
    <property type="entry name" value="WHTH_HrcA_DNA-bd"/>
</dbReference>
<dbReference type="InterPro" id="IPR023120">
    <property type="entry name" value="WHTH_transcript_rep_HrcA_IDD"/>
</dbReference>
<dbReference type="NCBIfam" id="TIGR00331">
    <property type="entry name" value="hrcA"/>
    <property type="match status" value="1"/>
</dbReference>
<dbReference type="PANTHER" id="PTHR34824">
    <property type="entry name" value="HEAT-INDUCIBLE TRANSCRIPTION REPRESSOR HRCA"/>
    <property type="match status" value="1"/>
</dbReference>
<dbReference type="PANTHER" id="PTHR34824:SF1">
    <property type="entry name" value="HEAT-INDUCIBLE TRANSCRIPTION REPRESSOR HRCA"/>
    <property type="match status" value="1"/>
</dbReference>
<dbReference type="Pfam" id="PF01628">
    <property type="entry name" value="HrcA"/>
    <property type="match status" value="1"/>
</dbReference>
<dbReference type="Pfam" id="PF03444">
    <property type="entry name" value="HrcA_DNA-bdg"/>
    <property type="match status" value="1"/>
</dbReference>
<dbReference type="PIRSF" id="PIRSF005485">
    <property type="entry name" value="HrcA"/>
    <property type="match status" value="1"/>
</dbReference>
<dbReference type="SUPFAM" id="SSF55781">
    <property type="entry name" value="GAF domain-like"/>
    <property type="match status" value="1"/>
</dbReference>
<dbReference type="SUPFAM" id="SSF46785">
    <property type="entry name" value="Winged helix' DNA-binding domain"/>
    <property type="match status" value="1"/>
</dbReference>
<feature type="chain" id="PRO_1000010388" description="Heat-inducible transcription repressor HrcA">
    <location>
        <begin position="1"/>
        <end position="340"/>
    </location>
</feature>
<organism>
    <name type="scientific">Burkholderia pseudomallei (strain 668)</name>
    <dbReference type="NCBI Taxonomy" id="320373"/>
    <lineage>
        <taxon>Bacteria</taxon>
        <taxon>Pseudomonadati</taxon>
        <taxon>Pseudomonadota</taxon>
        <taxon>Betaproteobacteria</taxon>
        <taxon>Burkholderiales</taxon>
        <taxon>Burkholderiaceae</taxon>
        <taxon>Burkholderia</taxon>
        <taxon>pseudomallei group</taxon>
    </lineage>
</organism>
<gene>
    <name evidence="1" type="primary">hrcA</name>
    <name type="ordered locus">BURPS668_3284</name>
</gene>
<evidence type="ECO:0000255" key="1">
    <source>
        <dbReference type="HAMAP-Rule" id="MF_00081"/>
    </source>
</evidence>
<name>HRCA_BURP6</name>
<accession>A3ND74</accession>
<reference key="1">
    <citation type="journal article" date="2010" name="Genome Biol. Evol.">
        <title>Continuing evolution of Burkholderia mallei through genome reduction and large-scale rearrangements.</title>
        <authorList>
            <person name="Losada L."/>
            <person name="Ronning C.M."/>
            <person name="DeShazer D."/>
            <person name="Woods D."/>
            <person name="Fedorova N."/>
            <person name="Kim H.S."/>
            <person name="Shabalina S.A."/>
            <person name="Pearson T.R."/>
            <person name="Brinkac L."/>
            <person name="Tan P."/>
            <person name="Nandi T."/>
            <person name="Crabtree J."/>
            <person name="Badger J."/>
            <person name="Beckstrom-Sternberg S."/>
            <person name="Saqib M."/>
            <person name="Schutzer S.E."/>
            <person name="Keim P."/>
            <person name="Nierman W.C."/>
        </authorList>
    </citation>
    <scope>NUCLEOTIDE SEQUENCE [LARGE SCALE GENOMIC DNA]</scope>
    <source>
        <strain>668</strain>
    </source>
</reference>
<proteinExistence type="inferred from homology"/>
<sequence length="340" mass="37426">MLDPRARTLLKTLIERYIADGQPVGSRTLSRYSGLELSPATIRNVMSDLEELGLVSSPHTSAGRVPTPRGYRLFVDTMLTVESPIDSDAVTRLVQTTLQAGEPQQRVVAAAASVLSNLSQFAGVVLTPRRSHVFKQIEFLRLSDKRILLIIVTPEGDVQNRMIATQRDYAPAQLTEASNYINAHFAGLSFDEVRRRLREEIDQLRGDMTALMHAAVTASTEEPDDEETVLISGERNLLEVADLSSDMARLRKLFDVFDQKTSLLQLLDVSSHAQGVQIFIGGESTLVPIDEMSVVTAPYEVNGKIVGTLGVIGPTRMAYNRVIPIVDITARLLSLTLSQQ</sequence>
<protein>
    <recommendedName>
        <fullName evidence="1">Heat-inducible transcription repressor HrcA</fullName>
    </recommendedName>
</protein>
<keyword id="KW-0678">Repressor</keyword>
<keyword id="KW-0346">Stress response</keyword>
<keyword id="KW-0804">Transcription</keyword>
<keyword id="KW-0805">Transcription regulation</keyword>
<comment type="function">
    <text evidence="1">Negative regulator of class I heat shock genes (grpE-dnaK-dnaJ and groELS operons). Prevents heat-shock induction of these operons.</text>
</comment>
<comment type="similarity">
    <text evidence="1">Belongs to the HrcA family.</text>
</comment>